<proteinExistence type="evidence at protein level"/>
<sequence length="419" mass="45157">MAMISHRLRRALLTATSYVNRSISSSITPASDFPSVSAAVLKRSVIGRSTEVATRAPARLFSTRQYKLYKEGDEITEDTVLFEGCDYNHWLITMDFSKEETPKSPEEMVAAYEETCAQGLGISVEEAKQRMYACSTTTYQGFQAIMTEQESEKFKDLPGVVFILPDSYIDPQNKEYGGDKYENGVITHRPPPIQSGRARPRPRFDRSGGGSGGPQNFQRNTQYGQQPPMQGGGGSYGPQQGYATPGQGQGTQAPPPFQGGYNQGPRSPPPPYQAGYNQGQGSPVPPYQAGYNQVQGSPVPPYQGTQSSYGQGGSGNYSQGPQGGYNQGGPRNYNPQGAGNFGPASGAGNLGPAPGAGNPGYGQGYSGPGQEQNQTFPQADQRNRDWNNNNPAGQPGSDQVRSRSIMNLASFFFDILIRH</sequence>
<name>MORF1_ARATH</name>
<evidence type="ECO:0000255" key="1"/>
<evidence type="ECO:0000256" key="2">
    <source>
        <dbReference type="SAM" id="MobiDB-lite"/>
    </source>
</evidence>
<evidence type="ECO:0000269" key="3">
    <source>
    </source>
</evidence>
<evidence type="ECO:0000269" key="4">
    <source>
    </source>
</evidence>
<evidence type="ECO:0000269" key="5">
    <source>
    </source>
</evidence>
<evidence type="ECO:0000269" key="6">
    <source>
    </source>
</evidence>
<evidence type="ECO:0000269" key="7">
    <source>
    </source>
</evidence>
<evidence type="ECO:0000303" key="8">
    <source>
    </source>
</evidence>
<evidence type="ECO:0000303" key="9">
    <source>
    </source>
</evidence>
<evidence type="ECO:0000305" key="10"/>
<evidence type="ECO:0000312" key="11">
    <source>
        <dbReference type="Araport" id="AT4G20020"/>
    </source>
</evidence>
<evidence type="ECO:0007829" key="12">
    <source>
        <dbReference type="PDB" id="5MPW"/>
    </source>
</evidence>
<feature type="transit peptide" description="Mitochondrion" evidence="1">
    <location>
        <begin position="1"/>
        <end position="60"/>
    </location>
</feature>
<feature type="chain" id="PRO_0000432524" description="Multiple organellar RNA editing factor 1, mitochondrial">
    <location>
        <begin position="61"/>
        <end position="419"/>
    </location>
</feature>
<feature type="region of interest" description="Disordered" evidence="2">
    <location>
        <begin position="174"/>
        <end position="401"/>
    </location>
</feature>
<feature type="compositionally biased region" description="Low complexity" evidence="2">
    <location>
        <begin position="237"/>
        <end position="252"/>
    </location>
</feature>
<feature type="compositionally biased region" description="Gly residues" evidence="2">
    <location>
        <begin position="310"/>
        <end position="327"/>
    </location>
</feature>
<feature type="compositionally biased region" description="Low complexity" evidence="2">
    <location>
        <begin position="342"/>
        <end position="356"/>
    </location>
</feature>
<feature type="compositionally biased region" description="Gly residues" evidence="2">
    <location>
        <begin position="357"/>
        <end position="367"/>
    </location>
</feature>
<feature type="compositionally biased region" description="Polar residues" evidence="2">
    <location>
        <begin position="371"/>
        <end position="401"/>
    </location>
</feature>
<feature type="splice variant" id="VSP_057525" description="In isoform 2.">
    <original>VRSRSIM</original>
    <variation>FPQGRRY</variation>
    <location>
        <begin position="400"/>
        <end position="406"/>
    </location>
</feature>
<feature type="splice variant" id="VSP_057526" description="In isoform 2.">
    <location>
        <begin position="407"/>
        <end position="419"/>
    </location>
</feature>
<feature type="strand" evidence="12">
    <location>
        <begin position="89"/>
        <end position="94"/>
    </location>
</feature>
<feature type="helix" evidence="12">
    <location>
        <begin position="105"/>
        <end position="120"/>
    </location>
</feature>
<feature type="helix" evidence="12">
    <location>
        <begin position="124"/>
        <end position="130"/>
    </location>
</feature>
<feature type="strand" evidence="12">
    <location>
        <begin position="131"/>
        <end position="138"/>
    </location>
</feature>
<feature type="strand" evidence="12">
    <location>
        <begin position="140"/>
        <end position="145"/>
    </location>
</feature>
<feature type="helix" evidence="12">
    <location>
        <begin position="148"/>
        <end position="152"/>
    </location>
</feature>
<feature type="helix" evidence="12">
    <location>
        <begin position="153"/>
        <end position="156"/>
    </location>
</feature>
<feature type="strand" evidence="12">
    <location>
        <begin position="160"/>
        <end position="165"/>
    </location>
</feature>
<feature type="helix" evidence="12">
    <location>
        <begin position="171"/>
        <end position="173"/>
    </location>
</feature>
<feature type="strand" evidence="12">
    <location>
        <begin position="177"/>
        <end position="182"/>
    </location>
</feature>
<feature type="strand" evidence="12">
    <location>
        <begin position="185"/>
        <end position="187"/>
    </location>
</feature>
<organism>
    <name type="scientific">Arabidopsis thaliana</name>
    <name type="common">Mouse-ear cress</name>
    <dbReference type="NCBI Taxonomy" id="3702"/>
    <lineage>
        <taxon>Eukaryota</taxon>
        <taxon>Viridiplantae</taxon>
        <taxon>Streptophyta</taxon>
        <taxon>Embryophyta</taxon>
        <taxon>Tracheophyta</taxon>
        <taxon>Spermatophyta</taxon>
        <taxon>Magnoliopsida</taxon>
        <taxon>eudicotyledons</taxon>
        <taxon>Gunneridae</taxon>
        <taxon>Pentapetalae</taxon>
        <taxon>rosids</taxon>
        <taxon>malvids</taxon>
        <taxon>Brassicales</taxon>
        <taxon>Brassicaceae</taxon>
        <taxon>Camelineae</taxon>
        <taxon>Arabidopsis</taxon>
    </lineage>
</organism>
<dbReference type="EMBL" id="AL021637">
    <property type="protein sequence ID" value="CAA16610.1"/>
    <property type="molecule type" value="Genomic_DNA"/>
</dbReference>
<dbReference type="EMBL" id="AL161552">
    <property type="protein sequence ID" value="CAB79002.1"/>
    <property type="molecule type" value="Genomic_DNA"/>
</dbReference>
<dbReference type="EMBL" id="CP002687">
    <property type="protein sequence ID" value="AEE84262.1"/>
    <property type="molecule type" value="Genomic_DNA"/>
</dbReference>
<dbReference type="EMBL" id="CP002687">
    <property type="protein sequence ID" value="AEE84263.1"/>
    <property type="molecule type" value="Genomic_DNA"/>
</dbReference>
<dbReference type="EMBL" id="BT002761">
    <property type="protein sequence ID" value="AAO22589.1"/>
    <property type="molecule type" value="mRNA"/>
</dbReference>
<dbReference type="EMBL" id="BX826898">
    <property type="status" value="NOT_ANNOTATED_CDS"/>
    <property type="molecule type" value="mRNA"/>
</dbReference>
<dbReference type="PIR" id="T04886">
    <property type="entry name" value="T04886"/>
</dbReference>
<dbReference type="RefSeq" id="NP_193735.1">
    <molecule id="O49429-1"/>
    <property type="nucleotide sequence ID" value="NM_118121.4"/>
</dbReference>
<dbReference type="RefSeq" id="NP_974579.1">
    <molecule id="O49429-2"/>
    <property type="nucleotide sequence ID" value="NM_202850.3"/>
</dbReference>
<dbReference type="PDB" id="5MPW">
    <property type="method" value="X-ray"/>
    <property type="resolution" value="1.50 A"/>
    <property type="chains" value="A/B/C/D=79-190"/>
</dbReference>
<dbReference type="PDB" id="5MPX">
    <property type="method" value="X-ray"/>
    <property type="resolution" value="1.94 A"/>
    <property type="chains" value="A/B/C/D=79-190"/>
</dbReference>
<dbReference type="PDBsum" id="5MPW"/>
<dbReference type="PDBsum" id="5MPX"/>
<dbReference type="SMR" id="O49429"/>
<dbReference type="FunCoup" id="O49429">
    <property type="interactions" value="704"/>
</dbReference>
<dbReference type="STRING" id="3702.O49429"/>
<dbReference type="GlyGen" id="O49429">
    <property type="glycosylation" value="1 site"/>
</dbReference>
<dbReference type="SwissPalm" id="O49429"/>
<dbReference type="PaxDb" id="3702-AT4G20020.1"/>
<dbReference type="ProteomicsDB" id="238303">
    <molecule id="O49429-1"/>
</dbReference>
<dbReference type="EnsemblPlants" id="AT4G20020.1">
    <molecule id="O49429-1"/>
    <property type="protein sequence ID" value="AT4G20020.1"/>
    <property type="gene ID" value="AT4G20020"/>
</dbReference>
<dbReference type="EnsemblPlants" id="AT4G20020.2">
    <molecule id="O49429-2"/>
    <property type="protein sequence ID" value="AT4G20020.2"/>
    <property type="gene ID" value="AT4G20020"/>
</dbReference>
<dbReference type="GeneID" id="827747"/>
<dbReference type="Gramene" id="AT4G20020.1">
    <molecule id="O49429-1"/>
    <property type="protein sequence ID" value="AT4G20020.1"/>
    <property type="gene ID" value="AT4G20020"/>
</dbReference>
<dbReference type="Gramene" id="AT4G20020.2">
    <molecule id="O49429-2"/>
    <property type="protein sequence ID" value="AT4G20020.2"/>
    <property type="gene ID" value="AT4G20020"/>
</dbReference>
<dbReference type="KEGG" id="ath:AT4G20020"/>
<dbReference type="Araport" id="AT4G20020"/>
<dbReference type="TAIR" id="AT4G20020">
    <property type="gene designation" value="MORF1"/>
</dbReference>
<dbReference type="eggNOG" id="ENOG502QUVM">
    <property type="taxonomic scope" value="Eukaryota"/>
</dbReference>
<dbReference type="InParanoid" id="O49429"/>
<dbReference type="OMA" id="MQNQQGN"/>
<dbReference type="PhylomeDB" id="O49429"/>
<dbReference type="CD-CODE" id="4299E36E">
    <property type="entry name" value="Nucleolus"/>
</dbReference>
<dbReference type="PRO" id="PR:O49429"/>
<dbReference type="Proteomes" id="UP000006548">
    <property type="component" value="Chromosome 4"/>
</dbReference>
<dbReference type="ExpressionAtlas" id="O49429">
    <property type="expression patterns" value="baseline and differential"/>
</dbReference>
<dbReference type="GO" id="GO:0009507">
    <property type="term" value="C:chloroplast"/>
    <property type="evidence" value="ECO:0007669"/>
    <property type="project" value="GOC"/>
</dbReference>
<dbReference type="GO" id="GO:0005739">
    <property type="term" value="C:mitochondrion"/>
    <property type="evidence" value="ECO:0007005"/>
    <property type="project" value="TAIR"/>
</dbReference>
<dbReference type="GO" id="GO:0046983">
    <property type="term" value="F:protein dimerization activity"/>
    <property type="evidence" value="ECO:0000353"/>
    <property type="project" value="TAIR"/>
</dbReference>
<dbReference type="GO" id="GO:1900865">
    <property type="term" value="P:chloroplast RNA modification"/>
    <property type="evidence" value="ECO:0000315"/>
    <property type="project" value="TAIR"/>
</dbReference>
<dbReference type="GO" id="GO:0016554">
    <property type="term" value="P:cytidine to uridine editing"/>
    <property type="evidence" value="ECO:0007669"/>
    <property type="project" value="InterPro"/>
</dbReference>
<dbReference type="GO" id="GO:1900864">
    <property type="term" value="P:mitochondrial RNA modification"/>
    <property type="evidence" value="ECO:0000315"/>
    <property type="project" value="TAIR"/>
</dbReference>
<dbReference type="GO" id="GO:0006397">
    <property type="term" value="P:mRNA processing"/>
    <property type="evidence" value="ECO:0007669"/>
    <property type="project" value="UniProtKB-KW"/>
</dbReference>
<dbReference type="Gene3D" id="3.30.70.80">
    <property type="entry name" value="Peptidase S8 propeptide/proteinase inhibitor I9"/>
    <property type="match status" value="1"/>
</dbReference>
<dbReference type="InterPro" id="IPR039206">
    <property type="entry name" value="MORF/ORRM1/DAG-like"/>
</dbReference>
<dbReference type="InterPro" id="IPR054059">
    <property type="entry name" value="MORF/ORRM1/DAG-like_MORF"/>
</dbReference>
<dbReference type="InterPro" id="IPR037045">
    <property type="entry name" value="S8pro/Inhibitor_I9_sf"/>
</dbReference>
<dbReference type="PANTHER" id="PTHR31346:SF5">
    <property type="entry name" value="MULTIPLE ORGANELLAR RNA EDITING FACTOR 1, MITOCHONDRIAL"/>
    <property type="match status" value="1"/>
</dbReference>
<dbReference type="PANTHER" id="PTHR31346">
    <property type="entry name" value="MULTIPLE ORGANELLAR RNA EDITING FACTOR 2, CHLOROPLASTIC-RELATED-RELATED"/>
    <property type="match status" value="1"/>
</dbReference>
<dbReference type="Pfam" id="PF21864">
    <property type="entry name" value="MORF_dom"/>
    <property type="match status" value="1"/>
</dbReference>
<accession>O49429</accession>
<accession>F4JU25</accession>
<comment type="function">
    <text evidence="3 4">Involved in organellar RNA editing. Required for the processing of numerous RNA editing sites in mitochondria (PubMed:22411807, PubMed:23818871). Binds to the mitochondrial MEF19 and MEF21 factors, two pentatricopeptide repeat-containing proteins involved in RNA editing (PubMed:22411807).</text>
</comment>
<comment type="subunit">
    <text evidence="3 5 6 7">Homodimer and heterodimer with MORF3 (PubMed:22411807, PubMed:25583991). Heterodimers with MORF8/RIP1, MORF4/RIP4 and MORF6/RIP6 (PubMed:25583991). Interacts with PCMP-E90/MEF13 (PubMed:26048647). Interacts with PCMP-H13/MEF35 (PubMed:26470017).</text>
</comment>
<comment type="subcellular location">
    <subcellularLocation>
        <location evidence="5">Mitochondrion</location>
    </subcellularLocation>
</comment>
<comment type="alternative products">
    <event type="alternative splicing"/>
    <isoform>
        <id>O49429-1</id>
        <name>1</name>
        <sequence type="displayed"/>
    </isoform>
    <isoform>
        <id>O49429-2</id>
        <name>2</name>
        <sequence type="described" ref="VSP_057525 VSP_057526"/>
    </isoform>
</comment>
<comment type="disruption phenotype">
    <text evidence="3 4">Embryonic lethality when homozygous.</text>
</comment>
<comment type="similarity">
    <text>Belongs to the MORF family.</text>
</comment>
<comment type="sequence caution" evidence="10">
    <conflict type="miscellaneous discrepancy">
        <sequence resource="EMBL" id="BX826898"/>
    </conflict>
    <text>Sequencing errors.</text>
</comment>
<keyword id="KW-0002">3D-structure</keyword>
<keyword id="KW-0025">Alternative splicing</keyword>
<keyword id="KW-0496">Mitochondrion</keyword>
<keyword id="KW-0507">mRNA processing</keyword>
<keyword id="KW-1185">Reference proteome</keyword>
<keyword id="KW-0809">Transit peptide</keyword>
<reference key="1">
    <citation type="journal article" date="1999" name="Nature">
        <title>Sequence and analysis of chromosome 4 of the plant Arabidopsis thaliana.</title>
        <authorList>
            <person name="Mayer K.F.X."/>
            <person name="Schueller C."/>
            <person name="Wambutt R."/>
            <person name="Murphy G."/>
            <person name="Volckaert G."/>
            <person name="Pohl T."/>
            <person name="Duesterhoeft A."/>
            <person name="Stiekema W."/>
            <person name="Entian K.-D."/>
            <person name="Terryn N."/>
            <person name="Harris B."/>
            <person name="Ansorge W."/>
            <person name="Brandt P."/>
            <person name="Grivell L.A."/>
            <person name="Rieger M."/>
            <person name="Weichselgartner M."/>
            <person name="de Simone V."/>
            <person name="Obermaier B."/>
            <person name="Mache R."/>
            <person name="Mueller M."/>
            <person name="Kreis M."/>
            <person name="Delseny M."/>
            <person name="Puigdomenech P."/>
            <person name="Watson M."/>
            <person name="Schmidtheini T."/>
            <person name="Reichert B."/>
            <person name="Portetelle D."/>
            <person name="Perez-Alonso M."/>
            <person name="Boutry M."/>
            <person name="Bancroft I."/>
            <person name="Vos P."/>
            <person name="Hoheisel J."/>
            <person name="Zimmermann W."/>
            <person name="Wedler H."/>
            <person name="Ridley P."/>
            <person name="Langham S.-A."/>
            <person name="McCullagh B."/>
            <person name="Bilham L."/>
            <person name="Robben J."/>
            <person name="van der Schueren J."/>
            <person name="Grymonprez B."/>
            <person name="Chuang Y.-J."/>
            <person name="Vandenbussche F."/>
            <person name="Braeken M."/>
            <person name="Weltjens I."/>
            <person name="Voet M."/>
            <person name="Bastiaens I."/>
            <person name="Aert R."/>
            <person name="Defoor E."/>
            <person name="Weitzenegger T."/>
            <person name="Bothe G."/>
            <person name="Ramsperger U."/>
            <person name="Hilbert H."/>
            <person name="Braun M."/>
            <person name="Holzer E."/>
            <person name="Brandt A."/>
            <person name="Peters S."/>
            <person name="van Staveren M."/>
            <person name="Dirkse W."/>
            <person name="Mooijman P."/>
            <person name="Klein Lankhorst R."/>
            <person name="Rose M."/>
            <person name="Hauf J."/>
            <person name="Koetter P."/>
            <person name="Berneiser S."/>
            <person name="Hempel S."/>
            <person name="Feldpausch M."/>
            <person name="Lamberth S."/>
            <person name="Van den Daele H."/>
            <person name="De Keyser A."/>
            <person name="Buysshaert C."/>
            <person name="Gielen J."/>
            <person name="Villarroel R."/>
            <person name="De Clercq R."/>
            <person name="van Montagu M."/>
            <person name="Rogers J."/>
            <person name="Cronin A."/>
            <person name="Quail M.A."/>
            <person name="Bray-Allen S."/>
            <person name="Clark L."/>
            <person name="Doggett J."/>
            <person name="Hall S."/>
            <person name="Kay M."/>
            <person name="Lennard N."/>
            <person name="McLay K."/>
            <person name="Mayes R."/>
            <person name="Pettett A."/>
            <person name="Rajandream M.A."/>
            <person name="Lyne M."/>
            <person name="Benes V."/>
            <person name="Rechmann S."/>
            <person name="Borkova D."/>
            <person name="Bloecker H."/>
            <person name="Scharfe M."/>
            <person name="Grimm M."/>
            <person name="Loehnert T.-H."/>
            <person name="Dose S."/>
            <person name="de Haan M."/>
            <person name="Maarse A.C."/>
            <person name="Schaefer M."/>
            <person name="Mueller-Auer S."/>
            <person name="Gabel C."/>
            <person name="Fuchs M."/>
            <person name="Fartmann B."/>
            <person name="Granderath K."/>
            <person name="Dauner D."/>
            <person name="Herzl A."/>
            <person name="Neumann S."/>
            <person name="Argiriou A."/>
            <person name="Vitale D."/>
            <person name="Liguori R."/>
            <person name="Piravandi E."/>
            <person name="Massenet O."/>
            <person name="Quigley F."/>
            <person name="Clabauld G."/>
            <person name="Muendlein A."/>
            <person name="Felber R."/>
            <person name="Schnabl S."/>
            <person name="Hiller R."/>
            <person name="Schmidt W."/>
            <person name="Lecharny A."/>
            <person name="Aubourg S."/>
            <person name="Chefdor F."/>
            <person name="Cooke R."/>
            <person name="Berger C."/>
            <person name="Monfort A."/>
            <person name="Casacuberta E."/>
            <person name="Gibbons T."/>
            <person name="Weber N."/>
            <person name="Vandenbol M."/>
            <person name="Bargues M."/>
            <person name="Terol J."/>
            <person name="Torres A."/>
            <person name="Perez-Perez A."/>
            <person name="Purnelle B."/>
            <person name="Bent E."/>
            <person name="Johnson S."/>
            <person name="Tacon D."/>
            <person name="Jesse T."/>
            <person name="Heijnen L."/>
            <person name="Schwarz S."/>
            <person name="Scholler P."/>
            <person name="Heber S."/>
            <person name="Francs P."/>
            <person name="Bielke C."/>
            <person name="Frishman D."/>
            <person name="Haase D."/>
            <person name="Lemcke K."/>
            <person name="Mewes H.-W."/>
            <person name="Stocker S."/>
            <person name="Zaccaria P."/>
            <person name="Bevan M."/>
            <person name="Wilson R.K."/>
            <person name="de la Bastide M."/>
            <person name="Habermann K."/>
            <person name="Parnell L."/>
            <person name="Dedhia N."/>
            <person name="Gnoj L."/>
            <person name="Schutz K."/>
            <person name="Huang E."/>
            <person name="Spiegel L."/>
            <person name="Sekhon M."/>
            <person name="Murray J."/>
            <person name="Sheet P."/>
            <person name="Cordes M."/>
            <person name="Abu-Threideh J."/>
            <person name="Stoneking T."/>
            <person name="Kalicki J."/>
            <person name="Graves T."/>
            <person name="Harmon G."/>
            <person name="Edwards J."/>
            <person name="Latreille P."/>
            <person name="Courtney L."/>
            <person name="Cloud J."/>
            <person name="Abbott A."/>
            <person name="Scott K."/>
            <person name="Johnson D."/>
            <person name="Minx P."/>
            <person name="Bentley D."/>
            <person name="Fulton B."/>
            <person name="Miller N."/>
            <person name="Greco T."/>
            <person name="Kemp K."/>
            <person name="Kramer J."/>
            <person name="Fulton L."/>
            <person name="Mardis E."/>
            <person name="Dante M."/>
            <person name="Pepin K."/>
            <person name="Hillier L.W."/>
            <person name="Nelson J."/>
            <person name="Spieth J."/>
            <person name="Ryan E."/>
            <person name="Andrews S."/>
            <person name="Geisel C."/>
            <person name="Layman D."/>
            <person name="Du H."/>
            <person name="Ali J."/>
            <person name="Berghoff A."/>
            <person name="Jones K."/>
            <person name="Drone K."/>
            <person name="Cotton M."/>
            <person name="Joshu C."/>
            <person name="Antonoiu B."/>
            <person name="Zidanic M."/>
            <person name="Strong C."/>
            <person name="Sun H."/>
            <person name="Lamar B."/>
            <person name="Yordan C."/>
            <person name="Ma P."/>
            <person name="Zhong J."/>
            <person name="Preston R."/>
            <person name="Vil D."/>
            <person name="Shekher M."/>
            <person name="Matero A."/>
            <person name="Shah R."/>
            <person name="Swaby I.K."/>
            <person name="O'Shaughnessy A."/>
            <person name="Rodriguez M."/>
            <person name="Hoffman J."/>
            <person name="Till S."/>
            <person name="Granat S."/>
            <person name="Shohdy N."/>
            <person name="Hasegawa A."/>
            <person name="Hameed A."/>
            <person name="Lodhi M."/>
            <person name="Johnson A."/>
            <person name="Chen E."/>
            <person name="Marra M.A."/>
            <person name="Martienssen R."/>
            <person name="McCombie W.R."/>
        </authorList>
    </citation>
    <scope>NUCLEOTIDE SEQUENCE [LARGE SCALE GENOMIC DNA]</scope>
    <source>
        <strain>cv. Columbia</strain>
    </source>
</reference>
<reference key="2">
    <citation type="journal article" date="2017" name="Plant J.">
        <title>Araport11: a complete reannotation of the Arabidopsis thaliana reference genome.</title>
        <authorList>
            <person name="Cheng C.Y."/>
            <person name="Krishnakumar V."/>
            <person name="Chan A.P."/>
            <person name="Thibaud-Nissen F."/>
            <person name="Schobel S."/>
            <person name="Town C.D."/>
        </authorList>
    </citation>
    <scope>GENOME REANNOTATION</scope>
    <source>
        <strain>cv. Columbia</strain>
    </source>
</reference>
<reference key="3">
    <citation type="journal article" date="2003" name="Science">
        <title>Empirical analysis of transcriptional activity in the Arabidopsis genome.</title>
        <authorList>
            <person name="Yamada K."/>
            <person name="Lim J."/>
            <person name="Dale J.M."/>
            <person name="Chen H."/>
            <person name="Shinn P."/>
            <person name="Palm C.J."/>
            <person name="Southwick A.M."/>
            <person name="Wu H.C."/>
            <person name="Kim C.J."/>
            <person name="Nguyen M."/>
            <person name="Pham P.K."/>
            <person name="Cheuk R.F."/>
            <person name="Karlin-Newmann G."/>
            <person name="Liu S.X."/>
            <person name="Lam B."/>
            <person name="Sakano H."/>
            <person name="Wu T."/>
            <person name="Yu G."/>
            <person name="Miranda M."/>
            <person name="Quach H.L."/>
            <person name="Tripp M."/>
            <person name="Chang C.H."/>
            <person name="Lee J.M."/>
            <person name="Toriumi M.J."/>
            <person name="Chan M.M."/>
            <person name="Tang C.C."/>
            <person name="Onodera C.S."/>
            <person name="Deng J.M."/>
            <person name="Akiyama K."/>
            <person name="Ansari Y."/>
            <person name="Arakawa T."/>
            <person name="Banh J."/>
            <person name="Banno F."/>
            <person name="Bowser L."/>
            <person name="Brooks S.Y."/>
            <person name="Carninci P."/>
            <person name="Chao Q."/>
            <person name="Choy N."/>
            <person name="Enju A."/>
            <person name="Goldsmith A.D."/>
            <person name="Gurjal M."/>
            <person name="Hansen N.F."/>
            <person name="Hayashizaki Y."/>
            <person name="Johnson-Hopson C."/>
            <person name="Hsuan V.W."/>
            <person name="Iida K."/>
            <person name="Karnes M."/>
            <person name="Khan S."/>
            <person name="Koesema E."/>
            <person name="Ishida J."/>
            <person name="Jiang P.X."/>
            <person name="Jones T."/>
            <person name="Kawai J."/>
            <person name="Kamiya A."/>
            <person name="Meyers C."/>
            <person name="Nakajima M."/>
            <person name="Narusaka M."/>
            <person name="Seki M."/>
            <person name="Sakurai T."/>
            <person name="Satou M."/>
            <person name="Tamse R."/>
            <person name="Vaysberg M."/>
            <person name="Wallender E.K."/>
            <person name="Wong C."/>
            <person name="Yamamura Y."/>
            <person name="Yuan S."/>
            <person name="Shinozaki K."/>
            <person name="Davis R.W."/>
            <person name="Theologis A."/>
            <person name="Ecker J.R."/>
        </authorList>
    </citation>
    <scope>NUCLEOTIDE SEQUENCE [LARGE SCALE MRNA] (ISOFORM 1)</scope>
    <source>
        <strain>cv. Columbia</strain>
    </source>
</reference>
<reference key="4">
    <citation type="journal article" date="2004" name="Genome Res.">
        <title>Whole genome sequence comparisons and 'full-length' cDNA sequences: a combined approach to evaluate and improve Arabidopsis genome annotation.</title>
        <authorList>
            <person name="Castelli V."/>
            <person name="Aury J.-M."/>
            <person name="Jaillon O."/>
            <person name="Wincker P."/>
            <person name="Clepet C."/>
            <person name="Menard M."/>
            <person name="Cruaud C."/>
            <person name="Quetier F."/>
            <person name="Scarpelli C."/>
            <person name="Schaechter V."/>
            <person name="Temple G."/>
            <person name="Caboche M."/>
            <person name="Weissenbach J."/>
            <person name="Salanoubat M."/>
        </authorList>
    </citation>
    <scope>NUCLEOTIDE SEQUENCE [LARGE SCALE MRNA] (ISOFORM 2)</scope>
    <source>
        <strain>cv. Columbia</strain>
    </source>
</reference>
<reference key="5">
    <citation type="journal article" date="2012" name="Proc. Natl. Acad. Sci. U.S.A.">
        <title>Multiple organellar RNA editing factor (MORF) family proteins are required for RNA editing in mitochondria and plastids of plants.</title>
        <authorList>
            <person name="Takenaka M."/>
            <person name="Zehrmann A."/>
            <person name="Verbitskiy D."/>
            <person name="Kugelmann M."/>
            <person name="Hartel B."/>
            <person name="Brennicke A."/>
        </authorList>
    </citation>
    <scope>FUNCTION</scope>
    <scope>INTERACTION WITH MORF3</scope>
    <scope>GENE FAMILY</scope>
    <scope>NOMENCLATURE</scope>
    <scope>DISRUPTION PHENOTYPE</scope>
</reference>
<reference key="6">
    <citation type="journal article" date="2013" name="PLoS Genet.">
        <title>Comprehensive high-resolution analysis of the role of an Arabidopsis gene family in RNA editing.</title>
        <authorList>
            <person name="Bentolila S."/>
            <person name="Oh J."/>
            <person name="Hanson M.R."/>
            <person name="Bukowski R."/>
        </authorList>
    </citation>
    <scope>FUNCTION</scope>
    <scope>DISRUPTION PHENOTYPE</scope>
</reference>
<reference key="7">
    <citation type="journal article" date="2015" name="J. Biol. Chem.">
        <title>Selective homo- and heteromer interactions between the multiple organellar RNA editing factor (MORF) proteins in Arabidopsis thaliana.</title>
        <authorList>
            <person name="Zehrmann A."/>
            <person name="Haertel B."/>
            <person name="Glass F."/>
            <person name="Bayer-Csaszar E."/>
            <person name="Obata T."/>
            <person name="Meyer E."/>
            <person name="Brennicke A."/>
            <person name="Takenaka M."/>
        </authorList>
    </citation>
    <scope>HOMODIMERIZATION</scope>
    <scope>INTERACTION WITH MORF8/RIP1; MORF3/RIP3; MORF4/RIP4 AND MORF6/RIP6</scope>
    <scope>SUBCELLULAR LOCATION</scope>
</reference>
<reference key="8">
    <citation type="journal article" date="2015" name="Mol. Plant">
        <title>MEF13 requires MORF3 and MORF8 for RNA editing at eight targets in mitochondrial mRNAs in Arabidopsis thaliana.</title>
        <authorList>
            <person name="Glass F."/>
            <person name="Haertel B."/>
            <person name="Zehrmann A."/>
            <person name="Verbitskiy D."/>
            <person name="Takenaka M."/>
        </authorList>
    </citation>
    <scope>INTERACTION WITH PCMP-E90/MEF13</scope>
</reference>
<reference key="9">
    <citation type="journal article" date="2015" name="PLoS ONE">
        <title>The DYW subgroup PPR protein MEF35 targets RNA editing sites in the mitochondrial rpl16, nad4 and cob mRNAs in Arabidopsis thaliana.</title>
        <authorList>
            <person name="Brehme N."/>
            <person name="Bayer-Csaszar E."/>
            <person name="Glass F."/>
            <person name="Takenaka M."/>
        </authorList>
    </citation>
    <scope>INTERACTION WITH PCMP-H13/MEF35</scope>
</reference>
<reference key="10">
    <citation type="journal article" date="2017" name="Nucleic Acids Res.">
        <title>Crystal structures of the Arabidopsis thaliana organellar RNA editing factors MORF1 and MORF9.</title>
        <authorList>
            <person name="Haag S."/>
            <person name="Schindler M."/>
            <person name="Berndt L."/>
            <person name="Brennicke A."/>
            <person name="Takenaka M."/>
            <person name="Weber G."/>
        </authorList>
    </citation>
    <scope>X-RAY CRYSTALLOGRAPHY (1.50 ANGSTROMS) OF 79-190</scope>
</reference>
<gene>
    <name evidence="8" type="primary">MORF1</name>
    <name evidence="9" type="synonym">RIP8</name>
    <name evidence="11" type="ordered locus">At4g20020</name>
</gene>
<protein>
    <recommendedName>
        <fullName evidence="10">Multiple organellar RNA editing factor 1, mitochondrial</fullName>
    </recommendedName>
    <alternativeName>
        <fullName evidence="9">RNA editing-interacting protein 8</fullName>
    </alternativeName>
</protein>